<name>FABV_SHEFN</name>
<keyword id="KW-0275">Fatty acid biosynthesis</keyword>
<keyword id="KW-0276">Fatty acid metabolism</keyword>
<keyword id="KW-0444">Lipid biosynthesis</keyword>
<keyword id="KW-0443">Lipid metabolism</keyword>
<keyword id="KW-0520">NAD</keyword>
<keyword id="KW-0560">Oxidoreductase</keyword>
<keyword id="KW-1185">Reference proteome</keyword>
<reference key="1">
    <citation type="submission" date="2006-08" db="EMBL/GenBank/DDBJ databases">
        <title>Complete sequence of Shewanella frigidimarina NCIMB 400.</title>
        <authorList>
            <consortium name="US DOE Joint Genome Institute"/>
            <person name="Copeland A."/>
            <person name="Lucas S."/>
            <person name="Lapidus A."/>
            <person name="Barry K."/>
            <person name="Detter J.C."/>
            <person name="Glavina del Rio T."/>
            <person name="Hammon N."/>
            <person name="Israni S."/>
            <person name="Dalin E."/>
            <person name="Tice H."/>
            <person name="Pitluck S."/>
            <person name="Fredrickson J.K."/>
            <person name="Kolker E."/>
            <person name="McCuel L.A."/>
            <person name="DiChristina T."/>
            <person name="Nealson K.H."/>
            <person name="Newman D."/>
            <person name="Tiedje J.M."/>
            <person name="Zhou J."/>
            <person name="Romine M.F."/>
            <person name="Culley D.E."/>
            <person name="Serres M."/>
            <person name="Chertkov O."/>
            <person name="Brettin T."/>
            <person name="Bruce D."/>
            <person name="Han C."/>
            <person name="Tapia R."/>
            <person name="Gilna P."/>
            <person name="Schmutz J."/>
            <person name="Larimer F."/>
            <person name="Land M."/>
            <person name="Hauser L."/>
            <person name="Kyrpides N."/>
            <person name="Mikhailova N."/>
            <person name="Richardson P."/>
        </authorList>
    </citation>
    <scope>NUCLEOTIDE SEQUENCE [LARGE SCALE GENOMIC DNA]</scope>
    <source>
        <strain>NCIMB 400</strain>
    </source>
</reference>
<dbReference type="EC" id="1.3.1.9" evidence="1"/>
<dbReference type="EMBL" id="CP000447">
    <property type="protein sequence ID" value="ABI72426.1"/>
    <property type="molecule type" value="Genomic_DNA"/>
</dbReference>
<dbReference type="RefSeq" id="WP_011638035.1">
    <property type="nucleotide sequence ID" value="NC_008345.1"/>
</dbReference>
<dbReference type="SMR" id="Q07ZY9"/>
<dbReference type="STRING" id="318167.Sfri_2585"/>
<dbReference type="KEGG" id="sfr:Sfri_2585"/>
<dbReference type="eggNOG" id="COG3007">
    <property type="taxonomic scope" value="Bacteria"/>
</dbReference>
<dbReference type="HOGENOM" id="CLU_057698_1_0_6"/>
<dbReference type="OrthoDB" id="9802260at2"/>
<dbReference type="UniPathway" id="UPA00094"/>
<dbReference type="Proteomes" id="UP000000684">
    <property type="component" value="Chromosome"/>
</dbReference>
<dbReference type="GO" id="GO:0004318">
    <property type="term" value="F:enoyl-[acyl-carrier-protein] reductase (NADH) activity"/>
    <property type="evidence" value="ECO:0007669"/>
    <property type="project" value="UniProtKB-UniRule"/>
</dbReference>
<dbReference type="GO" id="GO:0051287">
    <property type="term" value="F:NAD binding"/>
    <property type="evidence" value="ECO:0007669"/>
    <property type="project" value="UniProtKB-UniRule"/>
</dbReference>
<dbReference type="GO" id="GO:0050343">
    <property type="term" value="F:trans-2-enoyl-CoA reductase (NADH) activity"/>
    <property type="evidence" value="ECO:0007669"/>
    <property type="project" value="TreeGrafter"/>
</dbReference>
<dbReference type="GO" id="GO:0006633">
    <property type="term" value="P:fatty acid biosynthetic process"/>
    <property type="evidence" value="ECO:0007669"/>
    <property type="project" value="UniProtKB-UniRule"/>
</dbReference>
<dbReference type="FunFam" id="3.40.50.720:FF:000221">
    <property type="entry name" value="Enoyl-[acyl-carrier-protein] reductase [NADH]"/>
    <property type="match status" value="1"/>
</dbReference>
<dbReference type="Gene3D" id="3.40.50.720">
    <property type="entry name" value="NAD(P)-binding Rossmann-like Domain"/>
    <property type="match status" value="1"/>
</dbReference>
<dbReference type="HAMAP" id="MF_01838">
    <property type="entry name" value="FabV_reductase"/>
    <property type="match status" value="1"/>
</dbReference>
<dbReference type="InterPro" id="IPR024906">
    <property type="entry name" value="Eno_Rdtase_FAD-bd_dom"/>
</dbReference>
<dbReference type="InterPro" id="IPR024910">
    <property type="entry name" value="Enoyl-CoA_Rdtase_cat_dom"/>
</dbReference>
<dbReference type="InterPro" id="IPR050048">
    <property type="entry name" value="FabV-like_NADH_b"/>
</dbReference>
<dbReference type="InterPro" id="IPR010758">
    <property type="entry name" value="Trans-2-enoyl-CoA_reductase"/>
</dbReference>
<dbReference type="NCBIfam" id="NF043048">
    <property type="entry name" value="EnoyACPredFabV"/>
    <property type="match status" value="1"/>
</dbReference>
<dbReference type="NCBIfam" id="NF010177">
    <property type="entry name" value="PRK13656.1"/>
    <property type="match status" value="1"/>
</dbReference>
<dbReference type="PANTHER" id="PTHR37480">
    <property type="entry name" value="ENOYL-[ACYL-CARRIER-PROTEIN] REDUCTASE [NADH]"/>
    <property type="match status" value="1"/>
</dbReference>
<dbReference type="PANTHER" id="PTHR37480:SF1">
    <property type="entry name" value="ENOYL-[ACYL-CARRIER-PROTEIN] REDUCTASE [NADH]"/>
    <property type="match status" value="1"/>
</dbReference>
<dbReference type="Pfam" id="PF07055">
    <property type="entry name" value="Eno-Rase_FAD_bd"/>
    <property type="match status" value="1"/>
</dbReference>
<dbReference type="Pfam" id="PF12242">
    <property type="entry name" value="Eno-Rase_NADH_b"/>
    <property type="match status" value="1"/>
</dbReference>
<dbReference type="Pfam" id="PF12241">
    <property type="entry name" value="Enoyl_reductase"/>
    <property type="match status" value="1"/>
</dbReference>
<proteinExistence type="inferred from homology"/>
<accession>Q07ZY9</accession>
<organism>
    <name type="scientific">Shewanella frigidimarina (strain NCIMB 400)</name>
    <dbReference type="NCBI Taxonomy" id="318167"/>
    <lineage>
        <taxon>Bacteria</taxon>
        <taxon>Pseudomonadati</taxon>
        <taxon>Pseudomonadota</taxon>
        <taxon>Gammaproteobacteria</taxon>
        <taxon>Alteromonadales</taxon>
        <taxon>Shewanellaceae</taxon>
        <taxon>Shewanella</taxon>
    </lineage>
</organism>
<sequence length="400" mass="44096">MIIKPKIRGFICTTTHPVGCEANVKEQIELIKAKGKIANGPKKVLVVGSSSGYGLSSRITSAFGSDAATIGVFFEKPSSETKPGTAGWYNTAAFDKFAKAEGLYSKSINCDAFSHQAKQQVIELIKQDLGQIDMVVYSLASPVRKMPDTGEVIRSSLKPIGQTYTATAVDTNKNTIIDTSVEPATEQEIADTVTVMGGQDWELWMSALSEAGVLADNCKTVAYSYIGTELTWPIYWHGALGKAKMDLDRAAHALDSKLFATGGSANVAVLKSVVTQASSAIPVMPLYIAMVFKKMRQEGLHEGCIEQIYRLFSERLYRVDGQAPAVDSENRLRLDDWELREEIQQHCRDLWPLVTTENLSELTDYNEYKEEFLKLFGFGIDGIDYEAEVDPNVTFDVIEL</sequence>
<evidence type="ECO:0000255" key="1">
    <source>
        <dbReference type="HAMAP-Rule" id="MF_01838"/>
    </source>
</evidence>
<gene>
    <name evidence="1" type="primary">fabV</name>
    <name type="ordered locus">Sfri_2585</name>
</gene>
<feature type="chain" id="PRO_1000070499" description="Enoyl-[acyl-carrier-protein] reductase [NADH]">
    <location>
        <begin position="1"/>
        <end position="400"/>
    </location>
</feature>
<feature type="active site" description="Proton donor" evidence="1">
    <location>
        <position position="235"/>
    </location>
</feature>
<feature type="binding site" evidence="1">
    <location>
        <begin position="48"/>
        <end position="53"/>
    </location>
    <ligand>
        <name>NAD(+)</name>
        <dbReference type="ChEBI" id="CHEBI:57540"/>
    </ligand>
</feature>
<feature type="binding site" evidence="1">
    <location>
        <begin position="74"/>
        <end position="75"/>
    </location>
    <ligand>
        <name>NAD(+)</name>
        <dbReference type="ChEBI" id="CHEBI:57540"/>
    </ligand>
</feature>
<feature type="binding site" evidence="1">
    <location>
        <begin position="111"/>
        <end position="112"/>
    </location>
    <ligand>
        <name>NAD(+)</name>
        <dbReference type="ChEBI" id="CHEBI:57540"/>
    </ligand>
</feature>
<feature type="binding site" evidence="1">
    <location>
        <begin position="139"/>
        <end position="140"/>
    </location>
    <ligand>
        <name>NAD(+)</name>
        <dbReference type="ChEBI" id="CHEBI:57540"/>
    </ligand>
</feature>
<feature type="binding site" evidence="1">
    <location>
        <position position="225"/>
    </location>
    <ligand>
        <name>substrate</name>
    </ligand>
</feature>
<feature type="binding site" evidence="1">
    <location>
        <position position="244"/>
    </location>
    <ligand>
        <name>NAD(+)</name>
        <dbReference type="ChEBI" id="CHEBI:57540"/>
    </ligand>
</feature>
<feature type="binding site" evidence="1">
    <location>
        <begin position="273"/>
        <end position="275"/>
    </location>
    <ligand>
        <name>NAD(+)</name>
        <dbReference type="ChEBI" id="CHEBI:57540"/>
    </ligand>
</feature>
<feature type="site" description="Plays an important role in discriminating NADH against NADPH" evidence="1">
    <location>
        <position position="75"/>
    </location>
</feature>
<comment type="function">
    <text evidence="1">Involved in the final reduction of the elongation cycle of fatty acid synthesis (FAS II). Catalyzes the reduction of a carbon-carbon double bond in an enoyl moiety that is covalently linked to an acyl carrier protein (ACP).</text>
</comment>
<comment type="catalytic activity">
    <reaction evidence="1">
        <text>a 2,3-saturated acyl-[ACP] + NAD(+) = a (2E)-enoyl-[ACP] + NADH + H(+)</text>
        <dbReference type="Rhea" id="RHEA:10240"/>
        <dbReference type="Rhea" id="RHEA-COMP:9925"/>
        <dbReference type="Rhea" id="RHEA-COMP:9926"/>
        <dbReference type="ChEBI" id="CHEBI:15378"/>
        <dbReference type="ChEBI" id="CHEBI:57540"/>
        <dbReference type="ChEBI" id="CHEBI:57945"/>
        <dbReference type="ChEBI" id="CHEBI:78784"/>
        <dbReference type="ChEBI" id="CHEBI:78785"/>
        <dbReference type="EC" id="1.3.1.9"/>
    </reaction>
</comment>
<comment type="pathway">
    <text evidence="1">Lipid metabolism; fatty acid biosynthesis.</text>
</comment>
<comment type="subunit">
    <text evidence="1">Monomer.</text>
</comment>
<comment type="similarity">
    <text evidence="1">Belongs to the TER reductase family.</text>
</comment>
<protein>
    <recommendedName>
        <fullName evidence="1">Enoyl-[acyl-carrier-protein] reductase [NADH]</fullName>
        <shortName evidence="1">ENR</shortName>
        <ecNumber evidence="1">1.3.1.9</ecNumber>
    </recommendedName>
</protein>